<keyword id="KW-0238">DNA-binding</keyword>
<keyword id="KW-0539">Nucleus</keyword>
<keyword id="KW-0597">Phosphoprotein</keyword>
<keyword id="KW-1185">Reference proteome</keyword>
<keyword id="KW-0804">Transcription</keyword>
<keyword id="KW-0805">Transcription regulation</keyword>
<evidence type="ECO:0000250" key="1">
    <source>
        <dbReference type="UniProtKB" id="P35269"/>
    </source>
</evidence>
<evidence type="ECO:0000256" key="2">
    <source>
        <dbReference type="SAM" id="MobiDB-lite"/>
    </source>
</evidence>
<evidence type="ECO:0000269" key="3">
    <source>
    </source>
</evidence>
<evidence type="ECO:0000269" key="4">
    <source>
    </source>
</evidence>
<evidence type="ECO:0000303" key="5">
    <source>
    </source>
</evidence>
<evidence type="ECO:0000305" key="6"/>
<evidence type="ECO:0000305" key="7">
    <source>
    </source>
</evidence>
<evidence type="ECO:0000312" key="8">
    <source>
        <dbReference type="FlyBase" id="FBgn0010282"/>
    </source>
</evidence>
<gene>
    <name evidence="5 8" type="primary">TfIIFalpha</name>
    <name evidence="8" type="ORF">CG10281</name>
</gene>
<proteinExistence type="evidence at protein level"/>
<organism>
    <name type="scientific">Drosophila melanogaster</name>
    <name type="common">Fruit fly</name>
    <dbReference type="NCBI Taxonomy" id="7227"/>
    <lineage>
        <taxon>Eukaryota</taxon>
        <taxon>Metazoa</taxon>
        <taxon>Ecdysozoa</taxon>
        <taxon>Arthropoda</taxon>
        <taxon>Hexapoda</taxon>
        <taxon>Insecta</taxon>
        <taxon>Pterygota</taxon>
        <taxon>Neoptera</taxon>
        <taxon>Endopterygota</taxon>
        <taxon>Diptera</taxon>
        <taxon>Brachycera</taxon>
        <taxon>Muscomorpha</taxon>
        <taxon>Ephydroidea</taxon>
        <taxon>Drosophilidae</taxon>
        <taxon>Drosophila</taxon>
        <taxon>Sophophora</taxon>
    </lineage>
</organism>
<reference key="1">
    <citation type="journal article" date="1993" name="Nucleic Acids Res.">
        <title>Analysis of cDNA encoding Drosophila transcription initiation factor TFIIF alpha (RAP74).</title>
        <authorList>
            <person name="Gong D.-W."/>
            <person name="Horikoshi M."/>
            <person name="Nakatani Y."/>
        </authorList>
    </citation>
    <scope>NUCLEOTIDE SEQUENCE [MRNA]</scope>
</reference>
<reference key="2">
    <citation type="journal article" date="1993" name="Nucleic Acids Res.">
        <title>Cloning of a Drosophila cDNA with sequence similarity to human transcription factor RAP74.</title>
        <authorList>
            <person name="Kephart D."/>
            <person name="Price M.P."/>
            <person name="Burton Z.F."/>
            <person name="Finkelstein A."/>
            <person name="Greenblalt J."/>
            <person name="Price D.H."/>
        </authorList>
    </citation>
    <scope>NUCLEOTIDE SEQUENCE [MRNA]</scope>
</reference>
<reference key="3">
    <citation type="journal article" date="2000" name="Science">
        <title>The genome sequence of Drosophila melanogaster.</title>
        <authorList>
            <person name="Adams M.D."/>
            <person name="Celniker S.E."/>
            <person name="Holt R.A."/>
            <person name="Evans C.A."/>
            <person name="Gocayne J.D."/>
            <person name="Amanatides P.G."/>
            <person name="Scherer S.E."/>
            <person name="Li P.W."/>
            <person name="Hoskins R.A."/>
            <person name="Galle R.F."/>
            <person name="George R.A."/>
            <person name="Lewis S.E."/>
            <person name="Richards S."/>
            <person name="Ashburner M."/>
            <person name="Henderson S.N."/>
            <person name="Sutton G.G."/>
            <person name="Wortman J.R."/>
            <person name="Yandell M.D."/>
            <person name="Zhang Q."/>
            <person name="Chen L.X."/>
            <person name="Brandon R.C."/>
            <person name="Rogers Y.-H.C."/>
            <person name="Blazej R.G."/>
            <person name="Champe M."/>
            <person name="Pfeiffer B.D."/>
            <person name="Wan K.H."/>
            <person name="Doyle C."/>
            <person name="Baxter E.G."/>
            <person name="Helt G."/>
            <person name="Nelson C.R."/>
            <person name="Miklos G.L.G."/>
            <person name="Abril J.F."/>
            <person name="Agbayani A."/>
            <person name="An H.-J."/>
            <person name="Andrews-Pfannkoch C."/>
            <person name="Baldwin D."/>
            <person name="Ballew R.M."/>
            <person name="Basu A."/>
            <person name="Baxendale J."/>
            <person name="Bayraktaroglu L."/>
            <person name="Beasley E.M."/>
            <person name="Beeson K.Y."/>
            <person name="Benos P.V."/>
            <person name="Berman B.P."/>
            <person name="Bhandari D."/>
            <person name="Bolshakov S."/>
            <person name="Borkova D."/>
            <person name="Botchan M.R."/>
            <person name="Bouck J."/>
            <person name="Brokstein P."/>
            <person name="Brottier P."/>
            <person name="Burtis K.C."/>
            <person name="Busam D.A."/>
            <person name="Butler H."/>
            <person name="Cadieu E."/>
            <person name="Center A."/>
            <person name="Chandra I."/>
            <person name="Cherry J.M."/>
            <person name="Cawley S."/>
            <person name="Dahlke C."/>
            <person name="Davenport L.B."/>
            <person name="Davies P."/>
            <person name="de Pablos B."/>
            <person name="Delcher A."/>
            <person name="Deng Z."/>
            <person name="Mays A.D."/>
            <person name="Dew I."/>
            <person name="Dietz S.M."/>
            <person name="Dodson K."/>
            <person name="Doup L.E."/>
            <person name="Downes M."/>
            <person name="Dugan-Rocha S."/>
            <person name="Dunkov B.C."/>
            <person name="Dunn P."/>
            <person name="Durbin K.J."/>
            <person name="Evangelista C.C."/>
            <person name="Ferraz C."/>
            <person name="Ferriera S."/>
            <person name="Fleischmann W."/>
            <person name="Fosler C."/>
            <person name="Gabrielian A.E."/>
            <person name="Garg N.S."/>
            <person name="Gelbart W.M."/>
            <person name="Glasser K."/>
            <person name="Glodek A."/>
            <person name="Gong F."/>
            <person name="Gorrell J.H."/>
            <person name="Gu Z."/>
            <person name="Guan P."/>
            <person name="Harris M."/>
            <person name="Harris N.L."/>
            <person name="Harvey D.A."/>
            <person name="Heiman T.J."/>
            <person name="Hernandez J.R."/>
            <person name="Houck J."/>
            <person name="Hostin D."/>
            <person name="Houston K.A."/>
            <person name="Howland T.J."/>
            <person name="Wei M.-H."/>
            <person name="Ibegwam C."/>
            <person name="Jalali M."/>
            <person name="Kalush F."/>
            <person name="Karpen G.H."/>
            <person name="Ke Z."/>
            <person name="Kennison J.A."/>
            <person name="Ketchum K.A."/>
            <person name="Kimmel B.E."/>
            <person name="Kodira C.D."/>
            <person name="Kraft C.L."/>
            <person name="Kravitz S."/>
            <person name="Kulp D."/>
            <person name="Lai Z."/>
            <person name="Lasko P."/>
            <person name="Lei Y."/>
            <person name="Levitsky A.A."/>
            <person name="Li J.H."/>
            <person name="Li Z."/>
            <person name="Liang Y."/>
            <person name="Lin X."/>
            <person name="Liu X."/>
            <person name="Mattei B."/>
            <person name="McIntosh T.C."/>
            <person name="McLeod M.P."/>
            <person name="McPherson D."/>
            <person name="Merkulov G."/>
            <person name="Milshina N.V."/>
            <person name="Mobarry C."/>
            <person name="Morris J."/>
            <person name="Moshrefi A."/>
            <person name="Mount S.M."/>
            <person name="Moy M."/>
            <person name="Murphy B."/>
            <person name="Murphy L."/>
            <person name="Muzny D.M."/>
            <person name="Nelson D.L."/>
            <person name="Nelson D.R."/>
            <person name="Nelson K.A."/>
            <person name="Nixon K."/>
            <person name="Nusskern D.R."/>
            <person name="Pacleb J.M."/>
            <person name="Palazzolo M."/>
            <person name="Pittman G.S."/>
            <person name="Pan S."/>
            <person name="Pollard J."/>
            <person name="Puri V."/>
            <person name="Reese M.G."/>
            <person name="Reinert K."/>
            <person name="Remington K."/>
            <person name="Saunders R.D.C."/>
            <person name="Scheeler F."/>
            <person name="Shen H."/>
            <person name="Shue B.C."/>
            <person name="Siden-Kiamos I."/>
            <person name="Simpson M."/>
            <person name="Skupski M.P."/>
            <person name="Smith T.J."/>
            <person name="Spier E."/>
            <person name="Spradling A.C."/>
            <person name="Stapleton M."/>
            <person name="Strong R."/>
            <person name="Sun E."/>
            <person name="Svirskas R."/>
            <person name="Tector C."/>
            <person name="Turner R."/>
            <person name="Venter E."/>
            <person name="Wang A.H."/>
            <person name="Wang X."/>
            <person name="Wang Z.-Y."/>
            <person name="Wassarman D.A."/>
            <person name="Weinstock G.M."/>
            <person name="Weissenbach J."/>
            <person name="Williams S.M."/>
            <person name="Woodage T."/>
            <person name="Worley K.C."/>
            <person name="Wu D."/>
            <person name="Yang S."/>
            <person name="Yao Q.A."/>
            <person name="Ye J."/>
            <person name="Yeh R.-F."/>
            <person name="Zaveri J.S."/>
            <person name="Zhan M."/>
            <person name="Zhang G."/>
            <person name="Zhao Q."/>
            <person name="Zheng L."/>
            <person name="Zheng X.H."/>
            <person name="Zhong F.N."/>
            <person name="Zhong W."/>
            <person name="Zhou X."/>
            <person name="Zhu S.C."/>
            <person name="Zhu X."/>
            <person name="Smith H.O."/>
            <person name="Gibbs R.A."/>
            <person name="Myers E.W."/>
            <person name="Rubin G.M."/>
            <person name="Venter J.C."/>
        </authorList>
    </citation>
    <scope>NUCLEOTIDE SEQUENCE [LARGE SCALE GENOMIC DNA]</scope>
    <source>
        <strain>Berkeley</strain>
    </source>
</reference>
<reference key="4">
    <citation type="journal article" date="2002" name="Genome Biol.">
        <title>Annotation of the Drosophila melanogaster euchromatic genome: a systematic review.</title>
        <authorList>
            <person name="Misra S."/>
            <person name="Crosby M.A."/>
            <person name="Mungall C.J."/>
            <person name="Matthews B.B."/>
            <person name="Campbell K.S."/>
            <person name="Hradecky P."/>
            <person name="Huang Y."/>
            <person name="Kaminker J.S."/>
            <person name="Millburn G.H."/>
            <person name="Prochnik S.E."/>
            <person name="Smith C.D."/>
            <person name="Tupy J.L."/>
            <person name="Whitfield E.J."/>
            <person name="Bayraktaroglu L."/>
            <person name="Berman B.P."/>
            <person name="Bettencourt B.R."/>
            <person name="Celniker S.E."/>
            <person name="de Grey A.D.N.J."/>
            <person name="Drysdale R.A."/>
            <person name="Harris N.L."/>
            <person name="Richter J."/>
            <person name="Russo S."/>
            <person name="Schroeder A.J."/>
            <person name="Shu S.Q."/>
            <person name="Stapleton M."/>
            <person name="Yamada C."/>
            <person name="Ashburner M."/>
            <person name="Gelbart W.M."/>
            <person name="Rubin G.M."/>
            <person name="Lewis S.E."/>
        </authorList>
    </citation>
    <scope>GENOME REANNOTATION</scope>
    <source>
        <strain>Berkeley</strain>
    </source>
</reference>
<reference key="5">
    <citation type="journal article" date="2002" name="Genome Biol.">
        <title>A Drosophila full-length cDNA resource.</title>
        <authorList>
            <person name="Stapleton M."/>
            <person name="Carlson J.W."/>
            <person name="Brokstein P."/>
            <person name="Yu C."/>
            <person name="Champe M."/>
            <person name="George R.A."/>
            <person name="Guarin H."/>
            <person name="Kronmiller B."/>
            <person name="Pacleb J.M."/>
            <person name="Park S."/>
            <person name="Wan K.H."/>
            <person name="Rubin G.M."/>
            <person name="Celniker S.E."/>
        </authorList>
    </citation>
    <scope>NUCLEOTIDE SEQUENCE [LARGE SCALE MRNA]</scope>
    <source>
        <strain>Berkeley</strain>
        <tissue>Embryo</tissue>
    </source>
</reference>
<reference key="6">
    <citation type="journal article" date="1994" name="J. Biol. Chem.">
        <title>Functional analysis of Drosophila factor 5 (TFIIF), a general transcription factor.</title>
        <authorList>
            <person name="Kephart D."/>
            <person name="Wang B.Q."/>
            <person name="Burton Z.F."/>
            <person name="Price D.H."/>
        </authorList>
    </citation>
    <scope>FUNCTION</scope>
</reference>
<reference key="7">
    <citation type="journal article" date="2008" name="J. Proteome Res.">
        <title>Phosphoproteome analysis of Drosophila melanogaster embryos.</title>
        <authorList>
            <person name="Zhai B."/>
            <person name="Villen J."/>
            <person name="Beausoleil S.A."/>
            <person name="Mintseris J."/>
            <person name="Gygi S.P."/>
        </authorList>
    </citation>
    <scope>PHOSPHORYLATION [LARGE SCALE ANALYSIS] AT SER-183; SER-246; SER-250; SER-252; THR-341; SER-342; SER-352; SER-355; SER-453; SER-455; THR-457; SER-482; SER-484 AND THR-488</scope>
    <scope>IDENTIFICATION BY MASS SPECTROMETRY</scope>
    <source>
        <tissue>Embryo</tissue>
    </source>
</reference>
<name>T2FA_DROME</name>
<comment type="function">
    <text evidence="4">TFIIF is a general transcription initiation factor that binds to RNA polymerase II and helps to recruit it to the initiation complex in collaboration with TFIIB. It promotes transcription elongation.</text>
</comment>
<comment type="subunit">
    <text evidence="1">Heterodimer of an alpha and a beta subunit.</text>
</comment>
<comment type="subcellular location">
    <subcellularLocation>
        <location evidence="7">Nucleus</location>
    </subcellularLocation>
</comment>
<comment type="PTM">
    <text evidence="1">Phosphorylated on Ser and other residues by TAF1 and casein kinase II-like kinases.</text>
</comment>
<comment type="similarity">
    <text evidence="6">Belongs to the TFIIF alpha subunit family.</text>
</comment>
<feature type="chain" id="PRO_0000211233" description="General transcription factor IIF subunit 1">
    <location>
        <begin position="1"/>
        <end position="577"/>
    </location>
</feature>
<feature type="region of interest" description="Disordered" evidence="2">
    <location>
        <begin position="1"/>
        <end position="36"/>
    </location>
</feature>
<feature type="region of interest" description="Disordered" evidence="2">
    <location>
        <begin position="236"/>
        <end position="508"/>
    </location>
</feature>
<feature type="compositionally biased region" description="Acidic residues" evidence="2">
    <location>
        <begin position="240"/>
        <end position="256"/>
    </location>
</feature>
<feature type="compositionally biased region" description="Basic and acidic residues" evidence="2">
    <location>
        <begin position="257"/>
        <end position="271"/>
    </location>
</feature>
<feature type="compositionally biased region" description="Basic residues" evidence="2">
    <location>
        <begin position="272"/>
        <end position="285"/>
    </location>
</feature>
<feature type="compositionally biased region" description="Acidic residues" evidence="2">
    <location>
        <begin position="289"/>
        <end position="304"/>
    </location>
</feature>
<feature type="compositionally biased region" description="Basic and acidic residues" evidence="2">
    <location>
        <begin position="319"/>
        <end position="341"/>
    </location>
</feature>
<feature type="compositionally biased region" description="Basic and acidic residues" evidence="2">
    <location>
        <begin position="362"/>
        <end position="376"/>
    </location>
</feature>
<feature type="compositionally biased region" description="Low complexity" evidence="2">
    <location>
        <begin position="392"/>
        <end position="406"/>
    </location>
</feature>
<feature type="compositionally biased region" description="Basic and acidic residues" evidence="2">
    <location>
        <begin position="423"/>
        <end position="437"/>
    </location>
</feature>
<feature type="compositionally biased region" description="Low complexity" evidence="2">
    <location>
        <begin position="438"/>
        <end position="456"/>
    </location>
</feature>
<feature type="compositionally biased region" description="Polar residues" evidence="2">
    <location>
        <begin position="471"/>
        <end position="489"/>
    </location>
</feature>
<feature type="compositionally biased region" description="Polar residues" evidence="2">
    <location>
        <begin position="496"/>
        <end position="506"/>
    </location>
</feature>
<feature type="modified residue" description="Phosphoserine" evidence="3">
    <location>
        <position position="183"/>
    </location>
</feature>
<feature type="modified residue" description="Phosphoserine" evidence="3">
    <location>
        <position position="246"/>
    </location>
</feature>
<feature type="modified residue" description="Phosphoserine" evidence="3">
    <location>
        <position position="250"/>
    </location>
</feature>
<feature type="modified residue" description="Phosphoserine" evidence="3">
    <location>
        <position position="252"/>
    </location>
</feature>
<feature type="modified residue" description="Phosphothreonine" evidence="3">
    <location>
        <position position="341"/>
    </location>
</feature>
<feature type="modified residue" description="Phosphoserine" evidence="3">
    <location>
        <position position="342"/>
    </location>
</feature>
<feature type="modified residue" description="Phosphoserine" evidence="3">
    <location>
        <position position="352"/>
    </location>
</feature>
<feature type="modified residue" description="Phosphoserine" evidence="3">
    <location>
        <position position="355"/>
    </location>
</feature>
<feature type="modified residue" description="Phosphoserine" evidence="3">
    <location>
        <position position="453"/>
    </location>
</feature>
<feature type="modified residue" description="Phosphoserine" evidence="3">
    <location>
        <position position="455"/>
    </location>
</feature>
<feature type="modified residue" description="Phosphothreonine" evidence="3">
    <location>
        <position position="457"/>
    </location>
</feature>
<feature type="modified residue" description="Phosphoserine" evidence="3">
    <location>
        <position position="482"/>
    </location>
</feature>
<feature type="modified residue" description="Phosphoserine" evidence="3">
    <location>
        <position position="484"/>
    </location>
</feature>
<feature type="modified residue" description="Phosphothreonine" evidence="3">
    <location>
        <position position="488"/>
    </location>
</feature>
<feature type="sequence conflict" description="In Ref. 1; L10331." evidence="6" ref="1">
    <original>A</original>
    <variation>R</variation>
    <location>
        <position position="20"/>
    </location>
</feature>
<feature type="sequence conflict" description="In Ref. 1; L10331." evidence="6" ref="1">
    <original>E</original>
    <variation>G</variation>
    <location>
        <position position="76"/>
    </location>
</feature>
<feature type="sequence conflict" description="In Ref. 1; L10331." evidence="6" ref="1">
    <original>P</original>
    <variation>A</variation>
    <location>
        <position position="528"/>
    </location>
</feature>
<protein>
    <recommendedName>
        <fullName>General transcription factor IIF subunit 1</fullName>
    </recommendedName>
    <alternativeName>
        <fullName>Transcription factor 5 large chain</fullName>
        <shortName>TF5A</shortName>
    </alternativeName>
    <alternativeName>
        <fullName>Transcription initiation factor IIF subunit alpha</fullName>
        <shortName>TFIIF-alpha</shortName>
    </alternativeName>
</protein>
<dbReference type="EMBL" id="L10331">
    <property type="status" value="NOT_ANNOTATED_CDS"/>
    <property type="molecule type" value="mRNA"/>
</dbReference>
<dbReference type="EMBL" id="X66982">
    <property type="protein sequence ID" value="CAA47391.1"/>
    <property type="molecule type" value="mRNA"/>
</dbReference>
<dbReference type="EMBL" id="AE014297">
    <property type="protein sequence ID" value="AAF54125.1"/>
    <property type="molecule type" value="Genomic_DNA"/>
</dbReference>
<dbReference type="EMBL" id="AY051733">
    <property type="protein sequence ID" value="AAK93157.1"/>
    <property type="molecule type" value="mRNA"/>
</dbReference>
<dbReference type="PIR" id="S30237">
    <property type="entry name" value="S30237"/>
</dbReference>
<dbReference type="RefSeq" id="NP_524246.1">
    <property type="nucleotide sequence ID" value="NM_079522.4"/>
</dbReference>
<dbReference type="SMR" id="Q05913"/>
<dbReference type="BioGRID" id="65991">
    <property type="interactions" value="6"/>
</dbReference>
<dbReference type="ComplexPortal" id="CPX-2255">
    <property type="entry name" value="General transcription factor TFIIF complex"/>
</dbReference>
<dbReference type="DIP" id="DIP-17887N"/>
<dbReference type="FunCoup" id="Q05913">
    <property type="interactions" value="1563"/>
</dbReference>
<dbReference type="IntAct" id="Q05913">
    <property type="interactions" value="6"/>
</dbReference>
<dbReference type="STRING" id="7227.FBpp0081216"/>
<dbReference type="GlyGen" id="Q05913">
    <property type="glycosylation" value="1 site"/>
</dbReference>
<dbReference type="iPTMnet" id="Q05913"/>
<dbReference type="PaxDb" id="7227-FBpp0081216"/>
<dbReference type="DNASU" id="40790"/>
<dbReference type="EnsemblMetazoa" id="FBtr0081719">
    <property type="protein sequence ID" value="FBpp0081216"/>
    <property type="gene ID" value="FBgn0010282"/>
</dbReference>
<dbReference type="GeneID" id="40790"/>
<dbReference type="KEGG" id="dme:Dmel_CG10281"/>
<dbReference type="AGR" id="FB:FBgn0010282"/>
<dbReference type="CTD" id="40790"/>
<dbReference type="FlyBase" id="FBgn0010282">
    <property type="gene designation" value="TfIIFalpha"/>
</dbReference>
<dbReference type="VEuPathDB" id="VectorBase:FBgn0010282"/>
<dbReference type="eggNOG" id="KOG2393">
    <property type="taxonomic scope" value="Eukaryota"/>
</dbReference>
<dbReference type="GeneTree" id="ENSGT00440000038032"/>
<dbReference type="HOGENOM" id="CLU_027572_2_0_1"/>
<dbReference type="InParanoid" id="Q05913"/>
<dbReference type="OMA" id="MERENNQ"/>
<dbReference type="OrthoDB" id="76676at2759"/>
<dbReference type="PhylomeDB" id="Q05913"/>
<dbReference type="Reactome" id="R-DME-112382">
    <property type="pathway name" value="Formation of RNA Pol II elongation complex"/>
</dbReference>
<dbReference type="Reactome" id="R-DME-113418">
    <property type="pathway name" value="Formation of the Early Elongation Complex"/>
</dbReference>
<dbReference type="Reactome" id="R-DME-674695">
    <property type="pathway name" value="RNA Polymerase II Pre-transcription Events"/>
</dbReference>
<dbReference type="Reactome" id="R-DME-6796648">
    <property type="pathway name" value="TP53 Regulates Transcription of DNA Repair Genes"/>
</dbReference>
<dbReference type="Reactome" id="R-DME-6807505">
    <property type="pathway name" value="RNA polymerase II transcribes snRNA genes"/>
</dbReference>
<dbReference type="Reactome" id="R-DME-72086">
    <property type="pathway name" value="mRNA Capping"/>
</dbReference>
<dbReference type="Reactome" id="R-DME-72163">
    <property type="pathway name" value="mRNA Splicing - Major Pathway"/>
</dbReference>
<dbReference type="Reactome" id="R-DME-72165">
    <property type="pathway name" value="mRNA Splicing - Minor Pathway"/>
</dbReference>
<dbReference type="Reactome" id="R-DME-72203">
    <property type="pathway name" value="Processing of Capped Intron-Containing Pre-mRNA"/>
</dbReference>
<dbReference type="Reactome" id="R-DME-73776">
    <property type="pathway name" value="RNA Polymerase II Promoter Escape"/>
</dbReference>
<dbReference type="Reactome" id="R-DME-73779">
    <property type="pathway name" value="RNA Polymerase II Transcription Pre-Initiation And Promoter Opening"/>
</dbReference>
<dbReference type="Reactome" id="R-DME-75953">
    <property type="pathway name" value="RNA Polymerase II Transcription Initiation"/>
</dbReference>
<dbReference type="Reactome" id="R-DME-75955">
    <property type="pathway name" value="RNA Polymerase II Transcription Elongation"/>
</dbReference>
<dbReference type="Reactome" id="R-DME-76042">
    <property type="pathway name" value="RNA Polymerase II Transcription Initiation And Promoter Clearance"/>
</dbReference>
<dbReference type="Reactome" id="R-DME-77075">
    <property type="pathway name" value="RNA Pol II CTD phosphorylation and interaction with CE"/>
</dbReference>
<dbReference type="Reactome" id="R-DME-9018519">
    <property type="pathway name" value="Estrogen-dependent gene expression"/>
</dbReference>
<dbReference type="SignaLink" id="Q05913"/>
<dbReference type="BioGRID-ORCS" id="40790">
    <property type="hits" value="0 hits in 1 CRISPR screen"/>
</dbReference>
<dbReference type="GenomeRNAi" id="40790"/>
<dbReference type="PRO" id="PR:Q05913"/>
<dbReference type="Proteomes" id="UP000000803">
    <property type="component" value="Chromosome 3R"/>
</dbReference>
<dbReference type="Bgee" id="FBgn0010282">
    <property type="expression patterns" value="Expressed in spermatogonium in testis and 227 other cell types or tissues"/>
</dbReference>
<dbReference type="GO" id="GO:0005634">
    <property type="term" value="C:nucleus"/>
    <property type="evidence" value="ECO:0000314"/>
    <property type="project" value="FlyBase"/>
</dbReference>
<dbReference type="GO" id="GO:0005674">
    <property type="term" value="C:transcription factor TFIIF complex"/>
    <property type="evidence" value="ECO:0000314"/>
    <property type="project" value="FlyBase"/>
</dbReference>
<dbReference type="GO" id="GO:0003677">
    <property type="term" value="F:DNA binding"/>
    <property type="evidence" value="ECO:0007669"/>
    <property type="project" value="UniProtKB-KW"/>
</dbReference>
<dbReference type="GO" id="GO:0016251">
    <property type="term" value="F:RNA polymerase II general transcription initiation factor activity"/>
    <property type="evidence" value="ECO:0000318"/>
    <property type="project" value="GO_Central"/>
</dbReference>
<dbReference type="GO" id="GO:0001096">
    <property type="term" value="F:TFIIF-class transcription factor complex binding"/>
    <property type="evidence" value="ECO:0000353"/>
    <property type="project" value="FlyBase"/>
</dbReference>
<dbReference type="GO" id="GO:0032968">
    <property type="term" value="P:positive regulation of transcription elongation by RNA polymerase II"/>
    <property type="evidence" value="ECO:0007669"/>
    <property type="project" value="InterPro"/>
</dbReference>
<dbReference type="GO" id="GO:0006366">
    <property type="term" value="P:transcription by RNA polymerase II"/>
    <property type="evidence" value="ECO:0000314"/>
    <property type="project" value="FlyBase"/>
</dbReference>
<dbReference type="GO" id="GO:0006368">
    <property type="term" value="P:transcription elongation by RNA polymerase II"/>
    <property type="evidence" value="ECO:0000314"/>
    <property type="project" value="FlyBase"/>
</dbReference>
<dbReference type="GO" id="GO:0006367">
    <property type="term" value="P:transcription initiation at RNA polymerase II promoter"/>
    <property type="evidence" value="ECO:0000314"/>
    <property type="project" value="FlyBase"/>
</dbReference>
<dbReference type="CDD" id="cd00240">
    <property type="entry name" value="TFIIFa"/>
    <property type="match status" value="1"/>
</dbReference>
<dbReference type="Gene3D" id="1.10.10.10">
    <property type="entry name" value="Winged helix-like DNA-binding domain superfamily/Winged helix DNA-binding domain"/>
    <property type="match status" value="1"/>
</dbReference>
<dbReference type="InterPro" id="IPR008851">
    <property type="entry name" value="TFIIF-alpha"/>
</dbReference>
<dbReference type="InterPro" id="IPR011039">
    <property type="entry name" value="TFIIF_interaction"/>
</dbReference>
<dbReference type="InterPro" id="IPR036388">
    <property type="entry name" value="WH-like_DNA-bd_sf"/>
</dbReference>
<dbReference type="InterPro" id="IPR036390">
    <property type="entry name" value="WH_DNA-bd_sf"/>
</dbReference>
<dbReference type="PANTHER" id="PTHR13011:SF0">
    <property type="entry name" value="GENERAL TRANSCRIPTION FACTOR IIF SUBUNIT 1"/>
    <property type="match status" value="1"/>
</dbReference>
<dbReference type="PANTHER" id="PTHR13011">
    <property type="entry name" value="TFIIF-ALPHA"/>
    <property type="match status" value="1"/>
</dbReference>
<dbReference type="Pfam" id="PF05793">
    <property type="entry name" value="TFIIF_alpha"/>
    <property type="match status" value="1"/>
</dbReference>
<dbReference type="SUPFAM" id="SSF50916">
    <property type="entry name" value="Rap30/74 interaction domains"/>
    <property type="match status" value="1"/>
</dbReference>
<dbReference type="SUPFAM" id="SSF46785">
    <property type="entry name" value="Winged helix' DNA-binding domain"/>
    <property type="match status" value="1"/>
</dbReference>
<accession>Q05913</accession>
<accession>Q9VI19</accession>
<sequence length="577" mass="64467">MSSASKSTPSAASGSSTSAAAAAAASVASGSASSSANVQEFKIRVPKMPKKHHVMRFNATLNVDFAQWRNVKLERENNMKEFRGMEEDQPKFGAGSEYNRDQREEARRKKFGIIARKYRPEAQPWILKVGGKTGKKFKGIREGGVGENAAFYVFTHAPDGAIEAYPLTEWYNFQPIQRYKSLSAEEAEQEFGRRKKVMNYFSLMLRKRLRGDEEEEQDPEEAKLIKAATKKSKELKITDMDEWIDSEDESDSEDEEDKKKKEQEDSDDGKAKGKGKKGADKKKKKRDVDDEAFEESDDGDEEGREMDYDTSSSEDEPDPEAKVDKDMKGVAEEDALRKLLTSDEEEDDEKKSDESDKEDADGEKKKKDKGKDEVSKDKKKKKPTKDDKKGKSNGSGDSSTDFSSDSTDSEDDLSNGPPKKKVVVKDKDKEKEKEKESAASSKVIASSSNANKSRSATPTLSTDASKRKMNSLPSDLTASDTSNSPTSTPAKRPKNEISTSLPTSFSGGKVEDYGITEEAVRRYLKRKPLTATELLTKFKNKKTPVSSDRLVETMTKILKKINPVKHTIQGKMYLWIK</sequence>